<proteinExistence type="evidence at protein level"/>
<name>C19L2_MOUSE</name>
<sequence>MEAFSVRFESASSIEERKEQTRNARAEVLRQAKHNFEKEQRGEERKRLRDEDTWMLPDVHERIEQFSQEHSEKKKKKKDKHSKKVKKEKKKKRKKQKCQKQSESTDSSASSEDEWVEAAPSQISDKEKTWKVKDKRTEEECDSHDIQRDEWMTIDFMSIKTVSSSSLKAEKETLRQIEREKTQVLEQSKLLERELNPYWKDGGTGLPSKTCILPVTKAKGVEDGGLSWLRKSCQRMKEQAQKENRNFEDIVAEKYGSMEIFQSKLKEAEKIAYKKEDCGWERWRKPTYSDRAQCSQASGTSDLVKCKNLSEDRHLEMEPANSSNYKFSGPDTGKRSGTLQTCRRESALRKNQDSSGNLRSKFLRPSDEDELSFHKRKNFESSSSYSPLVAQASLHCDFRKLTENSEESSASCSRSDRRQENRKPSDKKPLETWSYNANQHSTGGRREQLQAESMSCDPPGRGLQQDMTLTIAGPEAESTYILNVDEKNKLGAKIIKAEMMGNMELAEQLKAQLKEANKFKETQMPAKRLGVEHEDEQEVILIQTDKSGRMWPVSSPRETLDMKAERRKRKRVSTHEDKERVRYFPDDDHLSLKDLVKNEKIGTDINQNRLFMKMASKFMGKSDEDNYTLDDMFVSKAAEKEHLGKKEESQRRRAIAEHQSLAAKMAKCLYCFDSSQFPKHLIVAIGVKVYLCLPSFQSLTEGHCFIVPLQHHQAATVLDEDVWEEIQMFRKSLVKMFEDKELDCIFLETNMGLKKHYHMVYECIPLPKEVGDMAPIYFKKAIMESDEEWSMNKKLIDLSSKDIRKSVPRGLPYFAVDFGLQGGFAHIIEDQYRFPHYFGKEIIGGMLDLEPRLWRKGIRESFEDQRKKSLQFAQWWKPYDITKSKSS</sequence>
<gene>
    <name type="primary">Cwf19l2</name>
</gene>
<protein>
    <recommendedName>
        <fullName>CWF19-like protein 2</fullName>
    </recommendedName>
</protein>
<keyword id="KW-0025">Alternative splicing</keyword>
<keyword id="KW-0175">Coiled coil</keyword>
<keyword id="KW-1017">Isopeptide bond</keyword>
<keyword id="KW-0597">Phosphoprotein</keyword>
<keyword id="KW-1185">Reference proteome</keyword>
<keyword id="KW-0832">Ubl conjugation</keyword>
<reference key="1">
    <citation type="journal article" date="2005" name="Science">
        <title>The transcriptional landscape of the mammalian genome.</title>
        <authorList>
            <person name="Carninci P."/>
            <person name="Kasukawa T."/>
            <person name="Katayama S."/>
            <person name="Gough J."/>
            <person name="Frith M.C."/>
            <person name="Maeda N."/>
            <person name="Oyama R."/>
            <person name="Ravasi T."/>
            <person name="Lenhard B."/>
            <person name="Wells C."/>
            <person name="Kodzius R."/>
            <person name="Shimokawa K."/>
            <person name="Bajic V.B."/>
            <person name="Brenner S.E."/>
            <person name="Batalov S."/>
            <person name="Forrest A.R."/>
            <person name="Zavolan M."/>
            <person name="Davis M.J."/>
            <person name="Wilming L.G."/>
            <person name="Aidinis V."/>
            <person name="Allen J.E."/>
            <person name="Ambesi-Impiombato A."/>
            <person name="Apweiler R."/>
            <person name="Aturaliya R.N."/>
            <person name="Bailey T.L."/>
            <person name="Bansal M."/>
            <person name="Baxter L."/>
            <person name="Beisel K.W."/>
            <person name="Bersano T."/>
            <person name="Bono H."/>
            <person name="Chalk A.M."/>
            <person name="Chiu K.P."/>
            <person name="Choudhary V."/>
            <person name="Christoffels A."/>
            <person name="Clutterbuck D.R."/>
            <person name="Crowe M.L."/>
            <person name="Dalla E."/>
            <person name="Dalrymple B.P."/>
            <person name="de Bono B."/>
            <person name="Della Gatta G."/>
            <person name="di Bernardo D."/>
            <person name="Down T."/>
            <person name="Engstrom P."/>
            <person name="Fagiolini M."/>
            <person name="Faulkner G."/>
            <person name="Fletcher C.F."/>
            <person name="Fukushima T."/>
            <person name="Furuno M."/>
            <person name="Futaki S."/>
            <person name="Gariboldi M."/>
            <person name="Georgii-Hemming P."/>
            <person name="Gingeras T.R."/>
            <person name="Gojobori T."/>
            <person name="Green R.E."/>
            <person name="Gustincich S."/>
            <person name="Harbers M."/>
            <person name="Hayashi Y."/>
            <person name="Hensch T.K."/>
            <person name="Hirokawa N."/>
            <person name="Hill D."/>
            <person name="Huminiecki L."/>
            <person name="Iacono M."/>
            <person name="Ikeo K."/>
            <person name="Iwama A."/>
            <person name="Ishikawa T."/>
            <person name="Jakt M."/>
            <person name="Kanapin A."/>
            <person name="Katoh M."/>
            <person name="Kawasawa Y."/>
            <person name="Kelso J."/>
            <person name="Kitamura H."/>
            <person name="Kitano H."/>
            <person name="Kollias G."/>
            <person name="Krishnan S.P."/>
            <person name="Kruger A."/>
            <person name="Kummerfeld S.K."/>
            <person name="Kurochkin I.V."/>
            <person name="Lareau L.F."/>
            <person name="Lazarevic D."/>
            <person name="Lipovich L."/>
            <person name="Liu J."/>
            <person name="Liuni S."/>
            <person name="McWilliam S."/>
            <person name="Madan Babu M."/>
            <person name="Madera M."/>
            <person name="Marchionni L."/>
            <person name="Matsuda H."/>
            <person name="Matsuzawa S."/>
            <person name="Miki H."/>
            <person name="Mignone F."/>
            <person name="Miyake S."/>
            <person name="Morris K."/>
            <person name="Mottagui-Tabar S."/>
            <person name="Mulder N."/>
            <person name="Nakano N."/>
            <person name="Nakauchi H."/>
            <person name="Ng P."/>
            <person name="Nilsson R."/>
            <person name="Nishiguchi S."/>
            <person name="Nishikawa S."/>
            <person name="Nori F."/>
            <person name="Ohara O."/>
            <person name="Okazaki Y."/>
            <person name="Orlando V."/>
            <person name="Pang K.C."/>
            <person name="Pavan W.J."/>
            <person name="Pavesi G."/>
            <person name="Pesole G."/>
            <person name="Petrovsky N."/>
            <person name="Piazza S."/>
            <person name="Reed J."/>
            <person name="Reid J.F."/>
            <person name="Ring B.Z."/>
            <person name="Ringwald M."/>
            <person name="Rost B."/>
            <person name="Ruan Y."/>
            <person name="Salzberg S.L."/>
            <person name="Sandelin A."/>
            <person name="Schneider C."/>
            <person name="Schoenbach C."/>
            <person name="Sekiguchi K."/>
            <person name="Semple C.A."/>
            <person name="Seno S."/>
            <person name="Sessa L."/>
            <person name="Sheng Y."/>
            <person name="Shibata Y."/>
            <person name="Shimada H."/>
            <person name="Shimada K."/>
            <person name="Silva D."/>
            <person name="Sinclair B."/>
            <person name="Sperling S."/>
            <person name="Stupka E."/>
            <person name="Sugiura K."/>
            <person name="Sultana R."/>
            <person name="Takenaka Y."/>
            <person name="Taki K."/>
            <person name="Tammoja K."/>
            <person name="Tan S.L."/>
            <person name="Tang S."/>
            <person name="Taylor M.S."/>
            <person name="Tegner J."/>
            <person name="Teichmann S.A."/>
            <person name="Ueda H.R."/>
            <person name="van Nimwegen E."/>
            <person name="Verardo R."/>
            <person name="Wei C.L."/>
            <person name="Yagi K."/>
            <person name="Yamanishi H."/>
            <person name="Zabarovsky E."/>
            <person name="Zhu S."/>
            <person name="Zimmer A."/>
            <person name="Hide W."/>
            <person name="Bult C."/>
            <person name="Grimmond S.M."/>
            <person name="Teasdale R.D."/>
            <person name="Liu E.T."/>
            <person name="Brusic V."/>
            <person name="Quackenbush J."/>
            <person name="Wahlestedt C."/>
            <person name="Mattick J.S."/>
            <person name="Hume D.A."/>
            <person name="Kai C."/>
            <person name="Sasaki D."/>
            <person name="Tomaru Y."/>
            <person name="Fukuda S."/>
            <person name="Kanamori-Katayama M."/>
            <person name="Suzuki M."/>
            <person name="Aoki J."/>
            <person name="Arakawa T."/>
            <person name="Iida J."/>
            <person name="Imamura K."/>
            <person name="Itoh M."/>
            <person name="Kato T."/>
            <person name="Kawaji H."/>
            <person name="Kawagashira N."/>
            <person name="Kawashima T."/>
            <person name="Kojima M."/>
            <person name="Kondo S."/>
            <person name="Konno H."/>
            <person name="Nakano K."/>
            <person name="Ninomiya N."/>
            <person name="Nishio T."/>
            <person name="Okada M."/>
            <person name="Plessy C."/>
            <person name="Shibata K."/>
            <person name="Shiraki T."/>
            <person name="Suzuki S."/>
            <person name="Tagami M."/>
            <person name="Waki K."/>
            <person name="Watahiki A."/>
            <person name="Okamura-Oho Y."/>
            <person name="Suzuki H."/>
            <person name="Kawai J."/>
            <person name="Hayashizaki Y."/>
        </authorList>
    </citation>
    <scope>NUCLEOTIDE SEQUENCE [LARGE SCALE MRNA] (ISOFORMS 1 AND 2)</scope>
    <source>
        <strain>C57BL/6J</strain>
        <tissue>Colon</tissue>
        <tissue>Corpora quadrigemina</tissue>
        <tissue>Egg</tissue>
        <tissue>Placenta</tissue>
        <tissue>Testis</tissue>
        <tissue>Thymus</tissue>
    </source>
</reference>
<reference key="2">
    <citation type="journal article" date="2004" name="Genome Res.">
        <title>The status, quality, and expansion of the NIH full-length cDNA project: the Mammalian Gene Collection (MGC).</title>
        <authorList>
            <consortium name="The MGC Project Team"/>
        </authorList>
    </citation>
    <scope>NUCLEOTIDE SEQUENCE [LARGE SCALE MRNA] (ISOFORM 1)</scope>
    <source>
        <tissue>Eye</tissue>
        <tissue>Thymus</tissue>
    </source>
</reference>
<reference key="3">
    <citation type="journal article" date="2010" name="Cell">
        <title>A tissue-specific atlas of mouse protein phosphorylation and expression.</title>
        <authorList>
            <person name="Huttlin E.L."/>
            <person name="Jedrychowski M.P."/>
            <person name="Elias J.E."/>
            <person name="Goswami T."/>
            <person name="Rad R."/>
            <person name="Beausoleil S.A."/>
            <person name="Villen J."/>
            <person name="Haas W."/>
            <person name="Sowa M.E."/>
            <person name="Gygi S.P."/>
        </authorList>
    </citation>
    <scope>PHOSPHORYLATION [LARGE SCALE ANALYSIS] AT SER-622</scope>
    <scope>IDENTIFICATION BY MASS SPECTROMETRY [LARGE SCALE ANALYSIS]</scope>
    <source>
        <tissue>Brain</tissue>
    </source>
</reference>
<accession>Q8BG79</accession>
<accession>Q3TIS8</accession>
<accession>Q3UX04</accession>
<accession>Q80XN7</accession>
<accession>Q8BZV5</accession>
<accession>Q8C0F8</accession>
<comment type="alternative products">
    <event type="alternative splicing"/>
    <isoform>
        <id>Q8BG79-1</id>
        <name>1</name>
        <sequence type="displayed"/>
    </isoform>
    <isoform>
        <id>Q8BG79-2</id>
        <name>2</name>
        <sequence type="described" ref="VSP_030594 VSP_030595"/>
    </isoform>
</comment>
<comment type="similarity">
    <text evidence="5">Belongs to the CWF19 family.</text>
</comment>
<comment type="sequence caution" evidence="5">
    <conflict type="erroneous initiation">
        <sequence resource="EMBL-CDS" id="BAC28298"/>
    </conflict>
</comment>
<comment type="sequence caution" evidence="5">
    <conflict type="erroneous initiation">
        <sequence resource="EMBL-CDS" id="BAE39768"/>
    </conflict>
</comment>
<evidence type="ECO:0000250" key="1">
    <source>
        <dbReference type="UniProtKB" id="Q2TBE0"/>
    </source>
</evidence>
<evidence type="ECO:0000255" key="2"/>
<evidence type="ECO:0000256" key="3">
    <source>
        <dbReference type="SAM" id="MobiDB-lite"/>
    </source>
</evidence>
<evidence type="ECO:0000303" key="4">
    <source>
    </source>
</evidence>
<evidence type="ECO:0000305" key="5"/>
<evidence type="ECO:0007744" key="6">
    <source>
    </source>
</evidence>
<organism>
    <name type="scientific">Mus musculus</name>
    <name type="common">Mouse</name>
    <dbReference type="NCBI Taxonomy" id="10090"/>
    <lineage>
        <taxon>Eukaryota</taxon>
        <taxon>Metazoa</taxon>
        <taxon>Chordata</taxon>
        <taxon>Craniata</taxon>
        <taxon>Vertebrata</taxon>
        <taxon>Euteleostomi</taxon>
        <taxon>Mammalia</taxon>
        <taxon>Eutheria</taxon>
        <taxon>Euarchontoglires</taxon>
        <taxon>Glires</taxon>
        <taxon>Rodentia</taxon>
        <taxon>Myomorpha</taxon>
        <taxon>Muroidea</taxon>
        <taxon>Muridae</taxon>
        <taxon>Murinae</taxon>
        <taxon>Mus</taxon>
        <taxon>Mus</taxon>
    </lineage>
</organism>
<feature type="chain" id="PRO_0000315649" description="CWF19-like protein 2">
    <location>
        <begin position="1"/>
        <end position="887"/>
    </location>
</feature>
<feature type="region of interest" description="Disordered" evidence="3">
    <location>
        <begin position="1"/>
        <end position="143"/>
    </location>
</feature>
<feature type="region of interest" description="Disordered" evidence="3">
    <location>
        <begin position="315"/>
        <end position="370"/>
    </location>
</feature>
<feature type="region of interest" description="Disordered" evidence="3">
    <location>
        <begin position="405"/>
        <end position="447"/>
    </location>
</feature>
<feature type="coiled-coil region" evidence="2">
    <location>
        <begin position="11"/>
        <end position="103"/>
    </location>
</feature>
<feature type="coiled-coil region" evidence="2">
    <location>
        <begin position="164"/>
        <end position="254"/>
    </location>
</feature>
<feature type="coiled-coil region" evidence="2">
    <location>
        <begin position="495"/>
        <end position="524"/>
    </location>
</feature>
<feature type="compositionally biased region" description="Basic and acidic residues" evidence="3">
    <location>
        <begin position="14"/>
        <end position="72"/>
    </location>
</feature>
<feature type="compositionally biased region" description="Basic residues" evidence="3">
    <location>
        <begin position="73"/>
        <end position="98"/>
    </location>
</feature>
<feature type="compositionally biased region" description="Low complexity" evidence="3">
    <location>
        <begin position="99"/>
        <end position="110"/>
    </location>
</feature>
<feature type="compositionally biased region" description="Basic and acidic residues" evidence="3">
    <location>
        <begin position="124"/>
        <end position="143"/>
    </location>
</feature>
<feature type="compositionally biased region" description="Basic and acidic residues" evidence="3">
    <location>
        <begin position="342"/>
        <end position="352"/>
    </location>
</feature>
<feature type="compositionally biased region" description="Basic and acidic residues" evidence="3">
    <location>
        <begin position="414"/>
        <end position="430"/>
    </location>
</feature>
<feature type="compositionally biased region" description="Polar residues" evidence="3">
    <location>
        <begin position="433"/>
        <end position="442"/>
    </location>
</feature>
<feature type="modified residue" description="Phosphoserine" evidence="1">
    <location>
        <position position="71"/>
    </location>
</feature>
<feature type="modified residue" description="Phosphoserine" evidence="1">
    <location>
        <position position="354"/>
    </location>
</feature>
<feature type="modified residue" description="Phosphoserine" evidence="1">
    <location>
        <position position="366"/>
    </location>
</feature>
<feature type="modified residue" description="Phosphoserine" evidence="1">
    <location>
        <position position="478"/>
    </location>
</feature>
<feature type="modified residue" description="Phosphoserine" evidence="6">
    <location>
        <position position="622"/>
    </location>
</feature>
<feature type="cross-link" description="Glycyl lysine isopeptide (Lys-Gly) (interchain with G-Cter in SUMO2)" evidence="1">
    <location>
        <position position="168"/>
    </location>
</feature>
<feature type="cross-link" description="Glycyl lysine isopeptide (Lys-Gly) (interchain with G-Cter in SUMO2)" evidence="1">
    <location>
        <position position="597"/>
    </location>
</feature>
<feature type="splice variant" id="VSP_030594" description="In isoform 2." evidence="4">
    <original>PEAESTYILNV</original>
    <variation>YFMYMCFHIDS</variation>
    <location>
        <begin position="474"/>
        <end position="484"/>
    </location>
</feature>
<feature type="splice variant" id="VSP_030595" description="In isoform 2." evidence="4">
    <location>
        <begin position="485"/>
        <end position="887"/>
    </location>
</feature>
<feature type="sequence conflict" description="In Ref. 1; BAC27397." evidence="5" ref="1">
    <original>Q</original>
    <variation>R</variation>
    <location>
        <position position="340"/>
    </location>
</feature>
<feature type="sequence conflict" description="In Ref. 1; BAC28298." evidence="5" ref="1">
    <original>D</original>
    <variation>E</variation>
    <location>
        <position position="594"/>
    </location>
</feature>
<feature type="sequence conflict" description="In Ref. 1; BAE39768." evidence="5" ref="1">
    <original>S</original>
    <variation>N</variation>
    <location>
        <position position="649"/>
    </location>
</feature>
<dbReference type="EMBL" id="AK031423">
    <property type="protein sequence ID" value="BAC27397.1"/>
    <property type="molecule type" value="mRNA"/>
</dbReference>
<dbReference type="EMBL" id="AK033457">
    <property type="protein sequence ID" value="BAC28298.1"/>
    <property type="status" value="ALT_INIT"/>
    <property type="molecule type" value="mRNA"/>
</dbReference>
<dbReference type="EMBL" id="AK045423">
    <property type="protein sequence ID" value="BAC32358.1"/>
    <property type="molecule type" value="mRNA"/>
</dbReference>
<dbReference type="EMBL" id="AK083386">
    <property type="protein sequence ID" value="BAC38896.1"/>
    <property type="molecule type" value="mRNA"/>
</dbReference>
<dbReference type="EMBL" id="AK135981">
    <property type="protein sequence ID" value="BAE22760.1"/>
    <property type="molecule type" value="mRNA"/>
</dbReference>
<dbReference type="EMBL" id="AK167727">
    <property type="protein sequence ID" value="BAE39768.1"/>
    <property type="status" value="ALT_INIT"/>
    <property type="molecule type" value="mRNA"/>
</dbReference>
<dbReference type="EMBL" id="BC043480">
    <property type="protein sequence ID" value="AAH43480.1"/>
    <property type="molecule type" value="mRNA"/>
</dbReference>
<dbReference type="EMBL" id="BC125483">
    <property type="protein sequence ID" value="AAI25484.1"/>
    <property type="molecule type" value="mRNA"/>
</dbReference>
<dbReference type="EMBL" id="BC125485">
    <property type="protein sequence ID" value="AAI25486.1"/>
    <property type="molecule type" value="mRNA"/>
</dbReference>
<dbReference type="CCDS" id="CCDS22793.1">
    <molecule id="Q8BG79-1"/>
</dbReference>
<dbReference type="RefSeq" id="NP_081821.1">
    <molecule id="Q8BG79-1"/>
    <property type="nucleotide sequence ID" value="NM_027545.2"/>
</dbReference>
<dbReference type="SMR" id="Q8BG79"/>
<dbReference type="BioGRID" id="232677">
    <property type="interactions" value="7"/>
</dbReference>
<dbReference type="FunCoup" id="Q8BG79">
    <property type="interactions" value="2431"/>
</dbReference>
<dbReference type="IntAct" id="Q8BG79">
    <property type="interactions" value="1"/>
</dbReference>
<dbReference type="STRING" id="10090.ENSMUSP00000027027"/>
<dbReference type="iPTMnet" id="Q8BG79"/>
<dbReference type="PhosphoSitePlus" id="Q8BG79"/>
<dbReference type="jPOST" id="Q8BG79"/>
<dbReference type="PaxDb" id="10090-ENSMUSP00000027027"/>
<dbReference type="PeptideAtlas" id="Q8BG79"/>
<dbReference type="ProteomicsDB" id="273721">
    <molecule id="Q8BG79-1"/>
</dbReference>
<dbReference type="ProteomicsDB" id="273722">
    <molecule id="Q8BG79-2"/>
</dbReference>
<dbReference type="Pumba" id="Q8BG79"/>
<dbReference type="Antibodypedia" id="50383">
    <property type="antibodies" value="34 antibodies from 14 providers"/>
</dbReference>
<dbReference type="DNASU" id="244672"/>
<dbReference type="Ensembl" id="ENSMUST00000027027.7">
    <molecule id="Q8BG79-1"/>
    <property type="protein sequence ID" value="ENSMUSP00000027027.6"/>
    <property type="gene ID" value="ENSMUSG00000025898.7"/>
</dbReference>
<dbReference type="GeneID" id="244672"/>
<dbReference type="KEGG" id="mmu:244672"/>
<dbReference type="UCSC" id="uc009oaz.1">
    <molecule id="Q8BG79-2"/>
    <property type="organism name" value="mouse"/>
</dbReference>
<dbReference type="UCSC" id="uc009oba.1">
    <molecule id="Q8BG79-1"/>
    <property type="organism name" value="mouse"/>
</dbReference>
<dbReference type="AGR" id="MGI:1918023"/>
<dbReference type="CTD" id="143884"/>
<dbReference type="MGI" id="MGI:1918023">
    <property type="gene designation" value="Cwf19l2"/>
</dbReference>
<dbReference type="VEuPathDB" id="HostDB:ENSMUSG00000025898"/>
<dbReference type="eggNOG" id="KOG2477">
    <property type="taxonomic scope" value="Eukaryota"/>
</dbReference>
<dbReference type="GeneTree" id="ENSGT00940000155627"/>
<dbReference type="HOGENOM" id="CLU_015540_0_0_1"/>
<dbReference type="InParanoid" id="Q8BG79"/>
<dbReference type="OMA" id="FMKCLTR"/>
<dbReference type="OrthoDB" id="2113965at2759"/>
<dbReference type="PhylomeDB" id="Q8BG79"/>
<dbReference type="TreeFam" id="TF351271"/>
<dbReference type="BioGRID-ORCS" id="244672">
    <property type="hits" value="10 hits in 77 CRISPR screens"/>
</dbReference>
<dbReference type="ChiTaRS" id="Cwf19l2">
    <property type="organism name" value="mouse"/>
</dbReference>
<dbReference type="PRO" id="PR:Q8BG79"/>
<dbReference type="Proteomes" id="UP000000589">
    <property type="component" value="Chromosome 9"/>
</dbReference>
<dbReference type="RNAct" id="Q8BG79">
    <property type="molecule type" value="protein"/>
</dbReference>
<dbReference type="Bgee" id="ENSMUSG00000025898">
    <property type="expression patterns" value="Expressed in manus and 230 other cell types or tissues"/>
</dbReference>
<dbReference type="FunFam" id="3.30.428.10:FF:000008">
    <property type="entry name" value="CWF19-like 2, cell cycle control"/>
    <property type="match status" value="1"/>
</dbReference>
<dbReference type="Gene3D" id="3.30.428.10">
    <property type="entry name" value="HIT-like"/>
    <property type="match status" value="1"/>
</dbReference>
<dbReference type="InterPro" id="IPR040194">
    <property type="entry name" value="Cwf19-like"/>
</dbReference>
<dbReference type="InterPro" id="IPR006768">
    <property type="entry name" value="Cwf19-like_C_dom-1"/>
</dbReference>
<dbReference type="InterPro" id="IPR006767">
    <property type="entry name" value="Cwf19-like_C_dom-2"/>
</dbReference>
<dbReference type="InterPro" id="IPR036265">
    <property type="entry name" value="HIT-like_sf"/>
</dbReference>
<dbReference type="PANTHER" id="PTHR12072">
    <property type="entry name" value="CWF19, CELL CYCLE CONTROL PROTEIN"/>
    <property type="match status" value="1"/>
</dbReference>
<dbReference type="PANTHER" id="PTHR12072:SF5">
    <property type="entry name" value="CWF19-LIKE PROTEIN 2"/>
    <property type="match status" value="1"/>
</dbReference>
<dbReference type="Pfam" id="PF04677">
    <property type="entry name" value="CwfJ_C_1"/>
    <property type="match status" value="1"/>
</dbReference>
<dbReference type="Pfam" id="PF04676">
    <property type="entry name" value="CwfJ_C_2"/>
    <property type="match status" value="1"/>
</dbReference>
<dbReference type="SUPFAM" id="SSF54197">
    <property type="entry name" value="HIT-like"/>
    <property type="match status" value="1"/>
</dbReference>